<name>CA11_CONST</name>
<evidence type="ECO:0000250" key="1"/>
<evidence type="ECO:0000250" key="2">
    <source>
        <dbReference type="UniProtKB" id="P69657"/>
    </source>
</evidence>
<evidence type="ECO:0000255" key="3"/>
<evidence type="ECO:0000305" key="4"/>
<accession>P0C1W4</accession>
<proteinExistence type="evidence at transcript level"/>
<reference key="1">
    <citation type="journal article" date="2004" name="J. Biol. Chem.">
        <title>The A-superfamily of conotoxins: structural and functional divergence.</title>
        <authorList>
            <person name="Santos A.D."/>
            <person name="McIntosh J.M."/>
            <person name="Hillyard D.R."/>
            <person name="Cruz L.J."/>
            <person name="Olivera B.M."/>
        </authorList>
    </citation>
    <scope>NUCLEOTIDE SEQUENCE [MRNA]</scope>
    <source>
        <tissue>Venom duct</tissue>
    </source>
</reference>
<feature type="signal peptide" evidence="3">
    <location>
        <begin position="1"/>
        <end position="21"/>
    </location>
</feature>
<feature type="propeptide" id="PRO_0000249791" evidence="1">
    <location>
        <begin position="22"/>
        <end position="48"/>
    </location>
</feature>
<feature type="peptide" id="PRO_0000249792" description="Alpha-conotoxin-like S1.1">
    <location>
        <begin position="49"/>
        <end position="61"/>
    </location>
</feature>
<feature type="modified residue" description="Cysteine amide" evidence="1">
    <location>
        <position position="61"/>
    </location>
</feature>
<feature type="disulfide bond" evidence="2">
    <location>
        <begin position="50"/>
        <end position="56"/>
    </location>
</feature>
<feature type="disulfide bond" evidence="2">
    <location>
        <begin position="51"/>
        <end position="61"/>
    </location>
</feature>
<comment type="function">
    <text evidence="1">Alpha-conotoxins act on postsynaptic membranes, they bind to the nicotinic acetylcholine receptors (nAChR) and thus inhibit them.</text>
</comment>
<comment type="subcellular location">
    <subcellularLocation>
        <location evidence="1">Secreted</location>
    </subcellularLocation>
</comment>
<comment type="tissue specificity">
    <text>Expressed by the venom duct.</text>
</comment>
<comment type="domain">
    <text>The cysteine framework is I (CC-C-C). Alpha4/4 pattern.</text>
</comment>
<comment type="similarity">
    <text evidence="4">Belongs to the conotoxin A superfamily.</text>
</comment>
<keyword id="KW-0008">Acetylcholine receptor inhibiting toxin</keyword>
<keyword id="KW-0027">Amidation</keyword>
<keyword id="KW-1015">Disulfide bond</keyword>
<keyword id="KW-0872">Ion channel impairing toxin</keyword>
<keyword id="KW-0528">Neurotoxin</keyword>
<keyword id="KW-0629">Postsynaptic neurotoxin</keyword>
<keyword id="KW-0964">Secreted</keyword>
<keyword id="KW-0732">Signal</keyword>
<keyword id="KW-0800">Toxin</keyword>
<protein>
    <recommendedName>
        <fullName>Alpha-conotoxin-like S1.1</fullName>
    </recommendedName>
</protein>
<organism>
    <name type="scientific">Conus striatus</name>
    <name type="common">Striated cone</name>
    <dbReference type="NCBI Taxonomy" id="6493"/>
    <lineage>
        <taxon>Eukaryota</taxon>
        <taxon>Metazoa</taxon>
        <taxon>Spiralia</taxon>
        <taxon>Lophotrochozoa</taxon>
        <taxon>Mollusca</taxon>
        <taxon>Gastropoda</taxon>
        <taxon>Caenogastropoda</taxon>
        <taxon>Neogastropoda</taxon>
        <taxon>Conoidea</taxon>
        <taxon>Conidae</taxon>
        <taxon>Conus</taxon>
        <taxon>Pionoconus</taxon>
    </lineage>
</organism>
<dbReference type="SMR" id="P0C1W4"/>
<dbReference type="ConoServer" id="12">
    <property type="toxin name" value="S1.1 precursor"/>
</dbReference>
<dbReference type="GO" id="GO:0005576">
    <property type="term" value="C:extracellular region"/>
    <property type="evidence" value="ECO:0007669"/>
    <property type="project" value="UniProtKB-SubCell"/>
</dbReference>
<dbReference type="GO" id="GO:0035792">
    <property type="term" value="C:host cell postsynaptic membrane"/>
    <property type="evidence" value="ECO:0007669"/>
    <property type="project" value="UniProtKB-KW"/>
</dbReference>
<dbReference type="GO" id="GO:0030550">
    <property type="term" value="F:acetylcholine receptor inhibitor activity"/>
    <property type="evidence" value="ECO:0007669"/>
    <property type="project" value="UniProtKB-KW"/>
</dbReference>
<dbReference type="GO" id="GO:0099106">
    <property type="term" value="F:ion channel regulator activity"/>
    <property type="evidence" value="ECO:0007669"/>
    <property type="project" value="UniProtKB-KW"/>
</dbReference>
<dbReference type="GO" id="GO:0090729">
    <property type="term" value="F:toxin activity"/>
    <property type="evidence" value="ECO:0007669"/>
    <property type="project" value="UniProtKB-KW"/>
</dbReference>
<dbReference type="InterPro" id="IPR009958">
    <property type="entry name" value="Conotoxin_a-typ"/>
</dbReference>
<dbReference type="Pfam" id="PF07365">
    <property type="entry name" value="Toxin_8"/>
    <property type="match status" value="1"/>
</dbReference>
<sequence>MGMRMMFTVFLLVVLAITVVSFPLDRESDGANAEARTHDHEKHALDRNGCCRNPACESHRCG</sequence>